<proteinExistence type="evidence at protein level"/>
<feature type="chain" id="PRO_0000121016" description="COP9 signalosome complex subunit 8">
    <location>
        <begin position="1" status="less than"/>
        <end position="23" status="greater than"/>
    </location>
</feature>
<feature type="non-terminal residue">
    <location>
        <position position="1"/>
    </location>
</feature>
<feature type="non-terminal residue">
    <location>
        <position position="23"/>
    </location>
</feature>
<comment type="function">
    <text evidence="1">Component of the COP9 signalosome complex (CSN), a complex involved in various cellular and developmental processes such as photomorphogenesis and auxin and jasmonate responses. The CSN complex is an essential regulator of the ubiquitin (Ubl) conjugation pathway by mediating the deneddylation of the cullin subunits of SCF-type E3 ligase complexes, leading to decrease the Ubl ligase activity of SCF. It is involved in repression of photomorphogenesis in darkness by regulating the activity of COP1-containing Ubl ligase complexes (By similarity).</text>
</comment>
<comment type="subunit">
    <text>Component of the CSN complex, probably composed of CSN1, CSN2, CSN3, CSN4, CSN5 (CSN5A or CSN5B), CSN6 (CSN6A or CSN6B), CSN7 and CSN8.</text>
</comment>
<comment type="subcellular location">
    <subcellularLocation>
        <location>Cytoplasm</location>
    </subcellularLocation>
    <subcellularLocation>
        <location>Nucleus</location>
    </subcellularLocation>
</comment>
<comment type="similarity">
    <text evidence="2">Belongs to the CSN8 family.</text>
</comment>
<reference key="1">
    <citation type="journal article" date="1998" name="FEBS Lett.">
        <title>The Arabidopsis homologue of an eIF3 complex subunit associates with the COP9 complex.</title>
        <authorList>
            <person name="Karniol B."/>
            <person name="Yahalom A."/>
            <person name="Kwok S."/>
            <person name="Tsuge T."/>
            <person name="Matsui M."/>
            <person name="Deng X.-W."/>
            <person name="Chamovitz D.A."/>
        </authorList>
    </citation>
    <scope>PROTEIN SEQUENCE</scope>
    <scope>COMPOSITION OF THE CSN COMPLEX</scope>
</reference>
<accession>P68396</accession>
<name>CSN8_BRAOL</name>
<gene>
    <name type="primary">CSN8</name>
    <name type="synonym">COP9</name>
    <name type="synonym">FUS7</name>
</gene>
<dbReference type="GO" id="GO:0008180">
    <property type="term" value="C:COP9 signalosome"/>
    <property type="evidence" value="ECO:0007669"/>
    <property type="project" value="UniProtKB-KW"/>
</dbReference>
<dbReference type="GO" id="GO:0005737">
    <property type="term" value="C:cytoplasm"/>
    <property type="evidence" value="ECO:0007669"/>
    <property type="project" value="UniProtKB-SubCell"/>
</dbReference>
<dbReference type="GO" id="GO:0009585">
    <property type="term" value="P:red, far-red light phototransduction"/>
    <property type="evidence" value="ECO:0007669"/>
    <property type="project" value="UniProtKB-KW"/>
</dbReference>
<organism>
    <name type="scientific">Brassica oleracea</name>
    <name type="common">Wild cabbage</name>
    <dbReference type="NCBI Taxonomy" id="3712"/>
    <lineage>
        <taxon>Eukaryota</taxon>
        <taxon>Viridiplantae</taxon>
        <taxon>Streptophyta</taxon>
        <taxon>Embryophyta</taxon>
        <taxon>Tracheophyta</taxon>
        <taxon>Spermatophyta</taxon>
        <taxon>Magnoliopsida</taxon>
        <taxon>eudicotyledons</taxon>
        <taxon>Gunneridae</taxon>
        <taxon>Pentapetalae</taxon>
        <taxon>rosids</taxon>
        <taxon>malvids</taxon>
        <taxon>Brassicales</taxon>
        <taxon>Brassicaceae</taxon>
        <taxon>Brassiceae</taxon>
        <taxon>Brassica</taxon>
    </lineage>
</organism>
<keyword id="KW-0963">Cytoplasm</keyword>
<keyword id="KW-0217">Developmental protein</keyword>
<keyword id="KW-0903">Direct protein sequencing</keyword>
<keyword id="KW-0539">Nucleus</keyword>
<keyword id="KW-0607">Phytochrome signaling pathway</keyword>
<keyword id="KW-0736">Signalosome</keyword>
<sequence length="23" mass="2748">LWTRDYAGVYEAIRGFDWSQDAK</sequence>
<protein>
    <recommendedName>
        <fullName>COP9 signalosome complex subunit 8</fullName>
        <shortName>CSN complex subunit 8</shortName>
    </recommendedName>
    <alternativeName>
        <fullName>Constitutive photomorphogenesis protein 9</fullName>
    </alternativeName>
    <alternativeName>
        <fullName>FUSCA protein 7</fullName>
        <shortName>FUSCA7</shortName>
    </alternativeName>
</protein>
<evidence type="ECO:0000250" key="1"/>
<evidence type="ECO:0000305" key="2"/>